<organism>
    <name type="scientific">Caulobacter vibrioides (strain ATCC 19089 / CIP 103742 / CB 15)</name>
    <name type="common">Caulobacter crescentus</name>
    <dbReference type="NCBI Taxonomy" id="190650"/>
    <lineage>
        <taxon>Bacteria</taxon>
        <taxon>Pseudomonadati</taxon>
        <taxon>Pseudomonadota</taxon>
        <taxon>Alphaproteobacteria</taxon>
        <taxon>Caulobacterales</taxon>
        <taxon>Caulobacteraceae</taxon>
        <taxon>Caulobacter</taxon>
    </lineage>
</organism>
<comment type="function">
    <text evidence="1">An accessory protein needed during the final step in the assembly of 30S ribosomal subunit, possibly for assembly of the head region. Essential for efficient processing of 16S rRNA. May be needed both before and after RbfA during the maturation of 16S rRNA. It has affinity for free ribosomal 30S subunits but not for 70S ribosomes.</text>
</comment>
<comment type="subunit">
    <text evidence="1">Binds ribosomal protein uS19.</text>
</comment>
<comment type="subcellular location">
    <subcellularLocation>
        <location evidence="1">Cytoplasm</location>
    </subcellularLocation>
</comment>
<comment type="domain">
    <text evidence="1">The PRC barrel domain binds ribosomal protein uS19.</text>
</comment>
<comment type="similarity">
    <text evidence="1">Belongs to the RimM family.</text>
</comment>
<keyword id="KW-0143">Chaperone</keyword>
<keyword id="KW-0963">Cytoplasm</keyword>
<keyword id="KW-1185">Reference proteome</keyword>
<keyword id="KW-0690">Ribosome biogenesis</keyword>
<keyword id="KW-0698">rRNA processing</keyword>
<dbReference type="EMBL" id="AE005673">
    <property type="protein sequence ID" value="AAK25613.1"/>
    <property type="molecule type" value="Genomic_DNA"/>
</dbReference>
<dbReference type="PIR" id="A87702">
    <property type="entry name" value="A87702"/>
</dbReference>
<dbReference type="RefSeq" id="NP_422445.1">
    <property type="nucleotide sequence ID" value="NC_002696.2"/>
</dbReference>
<dbReference type="RefSeq" id="WP_010921478.1">
    <property type="nucleotide sequence ID" value="NC_002696.2"/>
</dbReference>
<dbReference type="SMR" id="Q9A2B4"/>
<dbReference type="STRING" id="190650.CC_3651"/>
<dbReference type="DNASU" id="942862"/>
<dbReference type="EnsemblBacteria" id="AAK25613">
    <property type="protein sequence ID" value="AAK25613"/>
    <property type="gene ID" value="CC_3651"/>
</dbReference>
<dbReference type="KEGG" id="ccr:CC_3651"/>
<dbReference type="PATRIC" id="fig|190650.5.peg.3652"/>
<dbReference type="eggNOG" id="COG0806">
    <property type="taxonomic scope" value="Bacteria"/>
</dbReference>
<dbReference type="HOGENOM" id="CLU_077636_0_1_5"/>
<dbReference type="BioCyc" id="CAULO:CC3651-MONOMER"/>
<dbReference type="Proteomes" id="UP000001816">
    <property type="component" value="Chromosome"/>
</dbReference>
<dbReference type="GO" id="GO:0005737">
    <property type="term" value="C:cytoplasm"/>
    <property type="evidence" value="ECO:0007669"/>
    <property type="project" value="UniProtKB-SubCell"/>
</dbReference>
<dbReference type="GO" id="GO:0005840">
    <property type="term" value="C:ribosome"/>
    <property type="evidence" value="ECO:0007669"/>
    <property type="project" value="InterPro"/>
</dbReference>
<dbReference type="GO" id="GO:0043022">
    <property type="term" value="F:ribosome binding"/>
    <property type="evidence" value="ECO:0007669"/>
    <property type="project" value="InterPro"/>
</dbReference>
<dbReference type="GO" id="GO:0042274">
    <property type="term" value="P:ribosomal small subunit biogenesis"/>
    <property type="evidence" value="ECO:0007669"/>
    <property type="project" value="UniProtKB-UniRule"/>
</dbReference>
<dbReference type="GO" id="GO:0006364">
    <property type="term" value="P:rRNA processing"/>
    <property type="evidence" value="ECO:0007669"/>
    <property type="project" value="UniProtKB-UniRule"/>
</dbReference>
<dbReference type="Gene3D" id="2.30.30.240">
    <property type="entry name" value="PRC-barrel domain"/>
    <property type="match status" value="1"/>
</dbReference>
<dbReference type="Gene3D" id="2.40.30.60">
    <property type="entry name" value="RimM"/>
    <property type="match status" value="1"/>
</dbReference>
<dbReference type="HAMAP" id="MF_00014">
    <property type="entry name" value="Ribosome_mat_RimM"/>
    <property type="match status" value="1"/>
</dbReference>
<dbReference type="InterPro" id="IPR027275">
    <property type="entry name" value="PRC-brl_dom"/>
</dbReference>
<dbReference type="InterPro" id="IPR011033">
    <property type="entry name" value="PRC_barrel-like_sf"/>
</dbReference>
<dbReference type="InterPro" id="IPR011961">
    <property type="entry name" value="RimM"/>
</dbReference>
<dbReference type="InterPro" id="IPR002676">
    <property type="entry name" value="RimM_N"/>
</dbReference>
<dbReference type="InterPro" id="IPR036976">
    <property type="entry name" value="RimM_N_sf"/>
</dbReference>
<dbReference type="InterPro" id="IPR009000">
    <property type="entry name" value="Transl_B-barrel_sf"/>
</dbReference>
<dbReference type="NCBIfam" id="TIGR02273">
    <property type="entry name" value="16S_RimM"/>
    <property type="match status" value="1"/>
</dbReference>
<dbReference type="PANTHER" id="PTHR33692">
    <property type="entry name" value="RIBOSOME MATURATION FACTOR RIMM"/>
    <property type="match status" value="1"/>
</dbReference>
<dbReference type="PANTHER" id="PTHR33692:SF1">
    <property type="entry name" value="RIBOSOME MATURATION FACTOR RIMM"/>
    <property type="match status" value="1"/>
</dbReference>
<dbReference type="Pfam" id="PF05239">
    <property type="entry name" value="PRC"/>
    <property type="match status" value="1"/>
</dbReference>
<dbReference type="Pfam" id="PF01782">
    <property type="entry name" value="RimM"/>
    <property type="match status" value="1"/>
</dbReference>
<dbReference type="SUPFAM" id="SSF50346">
    <property type="entry name" value="PRC-barrel domain"/>
    <property type="match status" value="1"/>
</dbReference>
<dbReference type="SUPFAM" id="SSF50447">
    <property type="entry name" value="Translation proteins"/>
    <property type="match status" value="1"/>
</dbReference>
<accession>Q9A2B4</accession>
<protein>
    <recommendedName>
        <fullName evidence="1">Ribosome maturation factor RimM</fullName>
    </recommendedName>
</protein>
<name>RIMM_CAUVC</name>
<feature type="chain" id="PRO_0000163274" description="Ribosome maturation factor RimM">
    <location>
        <begin position="1"/>
        <end position="193"/>
    </location>
</feature>
<feature type="domain" description="PRC barrel" evidence="1">
    <location>
        <begin position="97"/>
        <end position="172"/>
    </location>
</feature>
<feature type="region of interest" description="Disordered" evidence="2">
    <location>
        <begin position="168"/>
        <end position="193"/>
    </location>
</feature>
<feature type="compositionally biased region" description="Basic and acidic residues" evidence="2">
    <location>
        <begin position="173"/>
        <end position="193"/>
    </location>
</feature>
<reference key="1">
    <citation type="journal article" date="2001" name="Proc. Natl. Acad. Sci. U.S.A.">
        <title>Complete genome sequence of Caulobacter crescentus.</title>
        <authorList>
            <person name="Nierman W.C."/>
            <person name="Feldblyum T.V."/>
            <person name="Laub M.T."/>
            <person name="Paulsen I.T."/>
            <person name="Nelson K.E."/>
            <person name="Eisen J.A."/>
            <person name="Heidelberg J.F."/>
            <person name="Alley M.R.K."/>
            <person name="Ohta N."/>
            <person name="Maddock J.R."/>
            <person name="Potocka I."/>
            <person name="Nelson W.C."/>
            <person name="Newton A."/>
            <person name="Stephens C."/>
            <person name="Phadke N.D."/>
            <person name="Ely B."/>
            <person name="DeBoy R.T."/>
            <person name="Dodson R.J."/>
            <person name="Durkin A.S."/>
            <person name="Gwinn M.L."/>
            <person name="Haft D.H."/>
            <person name="Kolonay J.F."/>
            <person name="Smit J."/>
            <person name="Craven M.B."/>
            <person name="Khouri H.M."/>
            <person name="Shetty J."/>
            <person name="Berry K.J."/>
            <person name="Utterback T.R."/>
            <person name="Tran K."/>
            <person name="Wolf A.M."/>
            <person name="Vamathevan J.J."/>
            <person name="Ermolaeva M.D."/>
            <person name="White O."/>
            <person name="Salzberg S.L."/>
            <person name="Venter J.C."/>
            <person name="Shapiro L."/>
            <person name="Fraser C.M."/>
        </authorList>
    </citation>
    <scope>NUCLEOTIDE SEQUENCE [LARGE SCALE GENOMIC DNA]</scope>
    <source>
        <strain>ATCC 19089 / CIP 103742 / CB 15</strain>
    </source>
</reference>
<sequence length="193" mass="20732">MAVSPDDPLILVGRVAGGFGVRGEVRITTYTEDPLSIAGFKALKRQDGSPALTIASARKTKDGVVCRCPGVETKEAADALRGLRLYVPRSALPEPDDDEFYLTDLVGLTVRHIQTDQLLGRVKSVQNFGAGDILEITPDLGGPTWYLPFTRAAVPEVRVSEGLILADPPALVGDHEGPEEKGLDENEELGDRD</sequence>
<proteinExistence type="inferred from homology"/>
<evidence type="ECO:0000255" key="1">
    <source>
        <dbReference type="HAMAP-Rule" id="MF_00014"/>
    </source>
</evidence>
<evidence type="ECO:0000256" key="2">
    <source>
        <dbReference type="SAM" id="MobiDB-lite"/>
    </source>
</evidence>
<gene>
    <name evidence="1" type="primary">rimM</name>
    <name type="ordered locus">CC_3651</name>
</gene>